<organism>
    <name type="scientific">Streptomyces coelicolor (strain ATCC BAA-471 / A3(2) / M145)</name>
    <dbReference type="NCBI Taxonomy" id="100226"/>
    <lineage>
        <taxon>Bacteria</taxon>
        <taxon>Bacillati</taxon>
        <taxon>Actinomycetota</taxon>
        <taxon>Actinomycetes</taxon>
        <taxon>Kitasatosporales</taxon>
        <taxon>Streptomycetaceae</taxon>
        <taxon>Streptomyces</taxon>
        <taxon>Streptomyces albidoflavus group</taxon>
    </lineage>
</organism>
<reference key="1">
    <citation type="journal article" date="1991" name="Mol. Gen. Genet.">
        <title>Nucleotide sequence of genes hrdA, hrdC, and hrdD from Streptomyces coelicolor A3(2) having similarity to rpoD genes.</title>
        <authorList>
            <person name="Tanaka K."/>
            <person name="Shiina T."/>
            <person name="Takahashi H."/>
        </authorList>
    </citation>
    <scope>NUCLEOTIDE SEQUENCE [GENOMIC DNA]</scope>
    <source>
        <strain>A3(2) / NRRL B-16638</strain>
    </source>
</reference>
<reference key="2">
    <citation type="journal article" date="2002" name="Nature">
        <title>Complete genome sequence of the model actinomycete Streptomyces coelicolor A3(2).</title>
        <authorList>
            <person name="Bentley S.D."/>
            <person name="Chater K.F."/>
            <person name="Cerdeno-Tarraga A.-M."/>
            <person name="Challis G.L."/>
            <person name="Thomson N.R."/>
            <person name="James K.D."/>
            <person name="Harris D.E."/>
            <person name="Quail M.A."/>
            <person name="Kieser H."/>
            <person name="Harper D."/>
            <person name="Bateman A."/>
            <person name="Brown S."/>
            <person name="Chandra G."/>
            <person name="Chen C.W."/>
            <person name="Collins M."/>
            <person name="Cronin A."/>
            <person name="Fraser A."/>
            <person name="Goble A."/>
            <person name="Hidalgo J."/>
            <person name="Hornsby T."/>
            <person name="Howarth S."/>
            <person name="Huang C.-H."/>
            <person name="Kieser T."/>
            <person name="Larke L."/>
            <person name="Murphy L.D."/>
            <person name="Oliver K."/>
            <person name="O'Neil S."/>
            <person name="Rabbinowitsch E."/>
            <person name="Rajandream M.A."/>
            <person name="Rutherford K.M."/>
            <person name="Rutter S."/>
            <person name="Seeger K."/>
            <person name="Saunders D."/>
            <person name="Sharp S."/>
            <person name="Squares R."/>
            <person name="Squares S."/>
            <person name="Taylor K."/>
            <person name="Warren T."/>
            <person name="Wietzorrek A."/>
            <person name="Woodward J.R."/>
            <person name="Barrell B.G."/>
            <person name="Parkhill J."/>
            <person name="Hopwood D.A."/>
        </authorList>
    </citation>
    <scope>NUCLEOTIDE SEQUENCE [LARGE SCALE GENOMIC DNA]</scope>
    <source>
        <strain>ATCC BAA-471 / A3(2) / M145</strain>
    </source>
</reference>
<reference key="3">
    <citation type="journal article" date="1988" name="Science">
        <title>Multiple principal sigma factor homologs in eubacteria: identification of the 'rpoD box'.</title>
        <authorList>
            <person name="Tanaka K."/>
            <person name="Shiina T."/>
            <person name="Takahashi H."/>
        </authorList>
    </citation>
    <scope>NUCLEOTIDE SEQUENCE [GENOMIC DNA] OF 128-179</scope>
    <source>
        <strain>A3(2) / NRRL B-16638</strain>
    </source>
</reference>
<feature type="chain" id="PRO_0000093994" description="RNA polymerase principal sigma factor HrdD">
    <location>
        <begin position="1"/>
        <end position="332"/>
    </location>
</feature>
<feature type="DNA-binding region" description="H-T-H motif" evidence="1">
    <location>
        <begin position="294"/>
        <end position="313"/>
    </location>
</feature>
<feature type="region of interest" description="Disordered" evidence="2">
    <location>
        <begin position="1"/>
        <end position="25"/>
    </location>
</feature>
<feature type="short sequence motif" description="Polymerase core binding">
    <location>
        <begin position="124"/>
        <end position="137"/>
    </location>
</feature>
<feature type="compositionally biased region" description="Basic residues" evidence="2">
    <location>
        <begin position="1"/>
        <end position="11"/>
    </location>
</feature>
<feature type="compositionally biased region" description="Low complexity" evidence="2">
    <location>
        <begin position="13"/>
        <end position="22"/>
    </location>
</feature>
<feature type="sequence conflict" description="In Ref. 3; no nucleotide entry." evidence="3" ref="3">
    <original>F</original>
    <variation>I</variation>
    <location>
        <position position="148"/>
    </location>
</feature>
<feature type="sequence conflict" description="In Ref. 3; no nucleotide entry." evidence="3" ref="3">
    <original>Q</original>
    <variation>H</variation>
    <location>
        <position position="167"/>
    </location>
</feature>
<feature type="sequence conflict" description="In Ref. 1; CAA37174." evidence="3" ref="1">
    <original>T</original>
    <variation>H</variation>
    <location>
        <position position="216"/>
    </location>
</feature>
<proteinExistence type="inferred from homology"/>
<comment type="function">
    <text evidence="1">Sigma factors are initiation factors that promote the attachment of RNA polymerase to specific initiation sites and are then released.</text>
</comment>
<comment type="subunit">
    <text evidence="1">Interacts transiently with the RNA polymerase catalytic core.</text>
</comment>
<comment type="similarity">
    <text evidence="3">Belongs to the sigma-70 factor family.</text>
</comment>
<accession>P18249</accession>
<accession>Q9KYU3</accession>
<protein>
    <recommendedName>
        <fullName>RNA polymerase principal sigma factor HrdD</fullName>
    </recommendedName>
</protein>
<gene>
    <name type="primary">hrdD</name>
    <name type="ordered locus">SCO3202</name>
    <name type="ORF">SCE22.19c</name>
</gene>
<name>HRDD_STRCO</name>
<keyword id="KW-0238">DNA-binding</keyword>
<keyword id="KW-1185">Reference proteome</keyword>
<keyword id="KW-0731">Sigma factor</keyword>
<keyword id="KW-0804">Transcription</keyword>
<keyword id="KW-0805">Transcription regulation</keyword>
<dbReference type="EMBL" id="X52982">
    <property type="protein sequence ID" value="CAA37174.1"/>
    <property type="molecule type" value="Genomic_DNA"/>
</dbReference>
<dbReference type="EMBL" id="AL939115">
    <property type="protein sequence ID" value="CAB90986.1"/>
    <property type="molecule type" value="Genomic_DNA"/>
</dbReference>
<dbReference type="PIR" id="D40116">
    <property type="entry name" value="D40116"/>
</dbReference>
<dbReference type="PIR" id="S17931">
    <property type="entry name" value="S11714"/>
</dbReference>
<dbReference type="RefSeq" id="NP_627416.1">
    <property type="nucleotide sequence ID" value="NC_003888.3"/>
</dbReference>
<dbReference type="RefSeq" id="WP_003975615.1">
    <property type="nucleotide sequence ID" value="NZ_VNID01000013.1"/>
</dbReference>
<dbReference type="SMR" id="P18249"/>
<dbReference type="STRING" id="100226.gene:17760820"/>
<dbReference type="PaxDb" id="100226-SCO3202"/>
<dbReference type="KEGG" id="sco:SCO3202"/>
<dbReference type="PATRIC" id="fig|100226.15.peg.3262"/>
<dbReference type="eggNOG" id="COG0568">
    <property type="taxonomic scope" value="Bacteria"/>
</dbReference>
<dbReference type="HOGENOM" id="CLU_014793_3_4_11"/>
<dbReference type="InParanoid" id="P18249"/>
<dbReference type="OrthoDB" id="9809557at2"/>
<dbReference type="PhylomeDB" id="P18249"/>
<dbReference type="Proteomes" id="UP000001973">
    <property type="component" value="Chromosome"/>
</dbReference>
<dbReference type="GO" id="GO:0003677">
    <property type="term" value="F:DNA binding"/>
    <property type="evidence" value="ECO:0007669"/>
    <property type="project" value="UniProtKB-KW"/>
</dbReference>
<dbReference type="GO" id="GO:0016987">
    <property type="term" value="F:sigma factor activity"/>
    <property type="evidence" value="ECO:0007669"/>
    <property type="project" value="UniProtKB-KW"/>
</dbReference>
<dbReference type="GO" id="GO:0006352">
    <property type="term" value="P:DNA-templated transcription initiation"/>
    <property type="evidence" value="ECO:0007669"/>
    <property type="project" value="InterPro"/>
</dbReference>
<dbReference type="CDD" id="cd06171">
    <property type="entry name" value="Sigma70_r4"/>
    <property type="match status" value="1"/>
</dbReference>
<dbReference type="FunFam" id="1.10.601.10:FF:000001">
    <property type="entry name" value="RNA polymerase sigma factor SigA"/>
    <property type="match status" value="1"/>
</dbReference>
<dbReference type="Gene3D" id="1.10.601.10">
    <property type="entry name" value="RNA Polymerase Primary Sigma Factor"/>
    <property type="match status" value="1"/>
</dbReference>
<dbReference type="Gene3D" id="1.10.10.10">
    <property type="entry name" value="Winged helix-like DNA-binding domain superfamily/Winged helix DNA-binding domain"/>
    <property type="match status" value="2"/>
</dbReference>
<dbReference type="InterPro" id="IPR014284">
    <property type="entry name" value="RNA_pol_sigma-70_dom"/>
</dbReference>
<dbReference type="InterPro" id="IPR000943">
    <property type="entry name" value="RNA_pol_sigma70"/>
</dbReference>
<dbReference type="InterPro" id="IPR009042">
    <property type="entry name" value="RNA_pol_sigma70_r1_2"/>
</dbReference>
<dbReference type="InterPro" id="IPR007627">
    <property type="entry name" value="RNA_pol_sigma70_r2"/>
</dbReference>
<dbReference type="InterPro" id="IPR007624">
    <property type="entry name" value="RNA_pol_sigma70_r3"/>
</dbReference>
<dbReference type="InterPro" id="IPR007630">
    <property type="entry name" value="RNA_pol_sigma70_r4"/>
</dbReference>
<dbReference type="InterPro" id="IPR013325">
    <property type="entry name" value="RNA_pol_sigma_r2"/>
</dbReference>
<dbReference type="InterPro" id="IPR013324">
    <property type="entry name" value="RNA_pol_sigma_r3/r4-like"/>
</dbReference>
<dbReference type="InterPro" id="IPR050239">
    <property type="entry name" value="Sigma-70_RNA_pol_init_factors"/>
</dbReference>
<dbReference type="InterPro" id="IPR036388">
    <property type="entry name" value="WH-like_DNA-bd_sf"/>
</dbReference>
<dbReference type="NCBIfam" id="TIGR02937">
    <property type="entry name" value="sigma70-ECF"/>
    <property type="match status" value="1"/>
</dbReference>
<dbReference type="PANTHER" id="PTHR30603:SF59">
    <property type="entry name" value="RNA POLYMERASE PRINCIPAL SIGMA FACTOR HRDA"/>
    <property type="match status" value="1"/>
</dbReference>
<dbReference type="PANTHER" id="PTHR30603">
    <property type="entry name" value="RNA POLYMERASE SIGMA FACTOR RPO"/>
    <property type="match status" value="1"/>
</dbReference>
<dbReference type="Pfam" id="PF00140">
    <property type="entry name" value="Sigma70_r1_2"/>
    <property type="match status" value="1"/>
</dbReference>
<dbReference type="Pfam" id="PF04542">
    <property type="entry name" value="Sigma70_r2"/>
    <property type="match status" value="1"/>
</dbReference>
<dbReference type="Pfam" id="PF04539">
    <property type="entry name" value="Sigma70_r3"/>
    <property type="match status" value="1"/>
</dbReference>
<dbReference type="Pfam" id="PF04545">
    <property type="entry name" value="Sigma70_r4"/>
    <property type="match status" value="1"/>
</dbReference>
<dbReference type="PRINTS" id="PR00046">
    <property type="entry name" value="SIGMA70FCT"/>
</dbReference>
<dbReference type="SUPFAM" id="SSF88946">
    <property type="entry name" value="Sigma2 domain of RNA polymerase sigma factors"/>
    <property type="match status" value="1"/>
</dbReference>
<dbReference type="SUPFAM" id="SSF88659">
    <property type="entry name" value="Sigma3 and sigma4 domains of RNA polymerase sigma factors"/>
    <property type="match status" value="2"/>
</dbReference>
<dbReference type="PROSITE" id="PS00715">
    <property type="entry name" value="SIGMA70_1"/>
    <property type="match status" value="1"/>
</dbReference>
<dbReference type="PROSITE" id="PS00716">
    <property type="entry name" value="SIGMA70_2"/>
    <property type="match status" value="1"/>
</dbReference>
<sequence length="332" mass="37155">MATRAVARRKSAAGETSGSATSVRANGGELADRDLVGMYLDEIARTPLLDAAKEVELSQTIEAGVFARQVLEGYEETGADATREELQALIDESERAKDVFIRSNLRLVVAVARRYPRSGLPLLDLIQEGNAGLVRAVEKFDYRKGFKFSTYATWWIRQAITRSIADQSRTIRLPVHLVEELGRIRRVQREFNREHGREPEPAEIAAELGSTPERVTDVLDWARDPVSLNMSVDDEGETQFGDLLEDTSAVSPEQSVLTLLRSEELDDLIGRLDPRTASIIKMRYGIDDGRERTLTEVGKEHGLTRERIRQIEKHALLELKKLARDTGFEAAA</sequence>
<evidence type="ECO:0000250" key="1"/>
<evidence type="ECO:0000256" key="2">
    <source>
        <dbReference type="SAM" id="MobiDB-lite"/>
    </source>
</evidence>
<evidence type="ECO:0000305" key="3"/>